<protein>
    <recommendedName>
        <fullName evidence="2">Peptidyl-tRNA hydrolase</fullName>
        <shortName evidence="2">Pth</shortName>
        <ecNumber evidence="2">3.1.1.29</ecNumber>
    </recommendedName>
</protein>
<proteinExistence type="evidence at protein level"/>
<comment type="function">
    <text evidence="2 3">Hydrolyzes ribosome-free peptidyl-tRNAs (with 1 or more amino acids incorporated), which drop off the ribosome during protein synthesis, or as a result of ribosome stalling.</text>
</comment>
<comment type="function">
    <text evidence="2">Catalyzes the release of premature peptidyl moieties from peptidyl-tRNA molecules trapped in stalled 50S ribosomal subunits, and thus maintains levels of free tRNAs and 50S ribosomes.</text>
</comment>
<comment type="function">
    <text evidence="1">Deacetylates bulk tRNA modified by TacT.</text>
</comment>
<comment type="catalytic activity">
    <reaction evidence="2">
        <text>an N-acyl-L-alpha-aminoacyl-tRNA + H2O = an N-acyl-L-amino acid + a tRNA + H(+)</text>
        <dbReference type="Rhea" id="RHEA:54448"/>
        <dbReference type="Rhea" id="RHEA-COMP:10123"/>
        <dbReference type="Rhea" id="RHEA-COMP:13883"/>
        <dbReference type="ChEBI" id="CHEBI:15377"/>
        <dbReference type="ChEBI" id="CHEBI:15378"/>
        <dbReference type="ChEBI" id="CHEBI:59874"/>
        <dbReference type="ChEBI" id="CHEBI:78442"/>
        <dbReference type="ChEBI" id="CHEBI:138191"/>
        <dbReference type="EC" id="3.1.1.29"/>
    </reaction>
</comment>
<comment type="catalytic activity">
    <reaction evidence="1">
        <text>N-acetylglycyl-tRNA(Gly) + H2O = N-acetylglycine + tRNA(Gly) + H(+)</text>
        <dbReference type="Rhea" id="RHEA:81979"/>
        <dbReference type="Rhea" id="RHEA-COMP:9664"/>
        <dbReference type="Rhea" id="RHEA-COMP:19766"/>
        <dbReference type="ChEBI" id="CHEBI:15377"/>
        <dbReference type="ChEBI" id="CHEBI:15378"/>
        <dbReference type="ChEBI" id="CHEBI:61887"/>
        <dbReference type="ChEBI" id="CHEBI:78442"/>
        <dbReference type="ChEBI" id="CHEBI:232036"/>
    </reaction>
</comment>
<comment type="subunit">
    <text evidence="2 3">Monomer.</text>
</comment>
<comment type="subcellular location">
    <subcellularLocation>
        <location evidence="2">Cytoplasm</location>
    </subcellularLocation>
</comment>
<comment type="similarity">
    <text evidence="2">Belongs to the PTH family.</text>
</comment>
<comment type="sequence caution" evidence="4">
    <conflict type="erroneous initiation">
        <sequence resource="EMBL-CDS" id="AAL20698"/>
    </conflict>
    <text>Extended N-terminus.</text>
</comment>
<reference key="1">
    <citation type="journal article" date="2001" name="Nature">
        <title>Complete genome sequence of Salmonella enterica serovar Typhimurium LT2.</title>
        <authorList>
            <person name="McClelland M."/>
            <person name="Sanderson K.E."/>
            <person name="Spieth J."/>
            <person name="Clifton S.W."/>
            <person name="Latreille P."/>
            <person name="Courtney L."/>
            <person name="Porwollik S."/>
            <person name="Ali J."/>
            <person name="Dante M."/>
            <person name="Du F."/>
            <person name="Hou S."/>
            <person name="Layman D."/>
            <person name="Leonard S."/>
            <person name="Nguyen C."/>
            <person name="Scott K."/>
            <person name="Holmes A."/>
            <person name="Grewal N."/>
            <person name="Mulvaney E."/>
            <person name="Ryan E."/>
            <person name="Sun H."/>
            <person name="Florea L."/>
            <person name="Miller W."/>
            <person name="Stoneking T."/>
            <person name="Nhan M."/>
            <person name="Waterston R."/>
            <person name="Wilson R.K."/>
        </authorList>
    </citation>
    <scope>NUCLEOTIDE SEQUENCE [LARGE SCALE GENOMIC DNA]</scope>
    <source>
        <strain>LT2 / SGSC1412 / ATCC 700720</strain>
    </source>
</reference>
<reference evidence="5" key="2">
    <citation type="journal article" date="2014" name="Acta Crystallogr. F Struct. Biol. Commun.">
        <title>Recombinant production, crystallization and X-ray crystallographic structure determination of peptidyl-tRNA hydrolase from Salmonella typhimurium.</title>
        <authorList>
            <person name="Vandavasi V."/>
            <person name="Taylor-Creel K."/>
            <person name="McFeeters R.L."/>
            <person name="Coates L."/>
            <person name="McFeeters H."/>
        </authorList>
    </citation>
    <scope>X-RAY CRYSTALLOGRAPHY (1.60 ANGSTROMS) OF 2-194</scope>
    <scope>FUNCTION</scope>
    <scope>SUBUNIT</scope>
    <source>
        <strain>LT2 / SGSC1412 / ATCC 700720</strain>
    </source>
</reference>
<feature type="chain" id="PRO_0000187810" description="Peptidyl-tRNA hydrolase">
    <location>
        <begin position="1"/>
        <end position="194"/>
    </location>
</feature>
<feature type="active site" description="Proton acceptor" evidence="2">
    <location>
        <position position="21"/>
    </location>
</feature>
<feature type="binding site" evidence="2">
    <location>
        <position position="16"/>
    </location>
    <ligand>
        <name>tRNA</name>
        <dbReference type="ChEBI" id="CHEBI:17843"/>
    </ligand>
</feature>
<feature type="binding site" evidence="2">
    <location>
        <position position="67"/>
    </location>
    <ligand>
        <name>tRNA</name>
        <dbReference type="ChEBI" id="CHEBI:17843"/>
    </ligand>
</feature>
<feature type="binding site" evidence="2">
    <location>
        <position position="69"/>
    </location>
    <ligand>
        <name>tRNA</name>
        <dbReference type="ChEBI" id="CHEBI:17843"/>
    </ligand>
</feature>
<feature type="binding site" evidence="2">
    <location>
        <position position="115"/>
    </location>
    <ligand>
        <name>tRNA</name>
        <dbReference type="ChEBI" id="CHEBI:17843"/>
    </ligand>
</feature>
<feature type="site" description="Discriminates between blocked and unblocked aminoacyl-tRNA" evidence="2">
    <location>
        <position position="11"/>
    </location>
</feature>
<feature type="site" description="Stabilizes the basic form of H active site to accept a proton" evidence="2">
    <location>
        <position position="94"/>
    </location>
</feature>
<evidence type="ECO:0000250" key="1">
    <source>
        <dbReference type="UniProtKB" id="A0A0F6B281"/>
    </source>
</evidence>
<evidence type="ECO:0000255" key="2">
    <source>
        <dbReference type="HAMAP-Rule" id="MF_00083"/>
    </source>
</evidence>
<evidence type="ECO:0000269" key="3">
    <source>
    </source>
</evidence>
<evidence type="ECO:0000305" key="4"/>
<evidence type="ECO:0007744" key="5">
    <source>
        <dbReference type="PDB" id="4P7B"/>
    </source>
</evidence>
<accession>P0A281</accession>
<accession>Q60001</accession>
<gene>
    <name evidence="2" type="primary">pth</name>
    <name type="ordered locus">STM1783</name>
</gene>
<dbReference type="EC" id="3.1.1.29" evidence="2"/>
<dbReference type="EMBL" id="AE006468">
    <property type="protein sequence ID" value="AAL20698.1"/>
    <property type="status" value="ALT_INIT"/>
    <property type="molecule type" value="Genomic_DNA"/>
</dbReference>
<dbReference type="RefSeq" id="NP_460739.3">
    <property type="nucleotide sequence ID" value="NC_003197.2"/>
</dbReference>
<dbReference type="RefSeq" id="WP_000365078.1">
    <property type="nucleotide sequence ID" value="NC_003197.2"/>
</dbReference>
<dbReference type="PDB" id="4P7B">
    <property type="method" value="X-ray"/>
    <property type="resolution" value="1.60 A"/>
    <property type="chains" value="A/C=2-194"/>
</dbReference>
<dbReference type="PDBsum" id="4P7B"/>
<dbReference type="SMR" id="P0A281"/>
<dbReference type="STRING" id="99287.STM1783"/>
<dbReference type="PaxDb" id="99287-STM1783"/>
<dbReference type="GeneID" id="1253302"/>
<dbReference type="KEGG" id="stm:STM1783"/>
<dbReference type="PATRIC" id="fig|99287.12.peg.1880"/>
<dbReference type="HOGENOM" id="CLU_062456_3_1_6"/>
<dbReference type="OMA" id="PNTYMNL"/>
<dbReference type="PhylomeDB" id="P0A281"/>
<dbReference type="Proteomes" id="UP000001014">
    <property type="component" value="Chromosome"/>
</dbReference>
<dbReference type="GO" id="GO:0005737">
    <property type="term" value="C:cytoplasm"/>
    <property type="evidence" value="ECO:0007669"/>
    <property type="project" value="UniProtKB-SubCell"/>
</dbReference>
<dbReference type="GO" id="GO:0004045">
    <property type="term" value="F:peptidyl-tRNA hydrolase activity"/>
    <property type="evidence" value="ECO:0000318"/>
    <property type="project" value="GO_Central"/>
</dbReference>
<dbReference type="GO" id="GO:0000049">
    <property type="term" value="F:tRNA binding"/>
    <property type="evidence" value="ECO:0007669"/>
    <property type="project" value="UniProtKB-UniRule"/>
</dbReference>
<dbReference type="GO" id="GO:0006515">
    <property type="term" value="P:protein quality control for misfolded or incompletely synthesized proteins"/>
    <property type="evidence" value="ECO:0007669"/>
    <property type="project" value="UniProtKB-UniRule"/>
</dbReference>
<dbReference type="GO" id="GO:0072344">
    <property type="term" value="P:rescue of stalled ribosome"/>
    <property type="evidence" value="ECO:0007669"/>
    <property type="project" value="UniProtKB-UniRule"/>
</dbReference>
<dbReference type="CDD" id="cd00462">
    <property type="entry name" value="PTH"/>
    <property type="match status" value="1"/>
</dbReference>
<dbReference type="FunFam" id="3.40.50.1470:FF:000001">
    <property type="entry name" value="Peptidyl-tRNA hydrolase"/>
    <property type="match status" value="1"/>
</dbReference>
<dbReference type="Gene3D" id="3.40.50.1470">
    <property type="entry name" value="Peptidyl-tRNA hydrolase"/>
    <property type="match status" value="1"/>
</dbReference>
<dbReference type="HAMAP" id="MF_00083">
    <property type="entry name" value="Pept_tRNA_hydro_bact"/>
    <property type="match status" value="1"/>
</dbReference>
<dbReference type="InterPro" id="IPR001328">
    <property type="entry name" value="Pept_tRNA_hydro"/>
</dbReference>
<dbReference type="InterPro" id="IPR018171">
    <property type="entry name" value="Pept_tRNA_hydro_CS"/>
</dbReference>
<dbReference type="InterPro" id="IPR036416">
    <property type="entry name" value="Pept_tRNA_hydro_sf"/>
</dbReference>
<dbReference type="NCBIfam" id="TIGR00447">
    <property type="entry name" value="pth"/>
    <property type="match status" value="1"/>
</dbReference>
<dbReference type="PANTHER" id="PTHR17224">
    <property type="entry name" value="PEPTIDYL-TRNA HYDROLASE"/>
    <property type="match status" value="1"/>
</dbReference>
<dbReference type="PANTHER" id="PTHR17224:SF1">
    <property type="entry name" value="PEPTIDYL-TRNA HYDROLASE"/>
    <property type="match status" value="1"/>
</dbReference>
<dbReference type="Pfam" id="PF01195">
    <property type="entry name" value="Pept_tRNA_hydro"/>
    <property type="match status" value="1"/>
</dbReference>
<dbReference type="SUPFAM" id="SSF53178">
    <property type="entry name" value="Peptidyl-tRNA hydrolase-like"/>
    <property type="match status" value="1"/>
</dbReference>
<dbReference type="PROSITE" id="PS01195">
    <property type="entry name" value="PEPT_TRNA_HYDROL_1"/>
    <property type="match status" value="1"/>
</dbReference>
<dbReference type="PROSITE" id="PS01196">
    <property type="entry name" value="PEPT_TRNA_HYDROL_2"/>
    <property type="match status" value="1"/>
</dbReference>
<organism>
    <name type="scientific">Salmonella typhimurium (strain LT2 / SGSC1412 / ATCC 700720)</name>
    <dbReference type="NCBI Taxonomy" id="99287"/>
    <lineage>
        <taxon>Bacteria</taxon>
        <taxon>Pseudomonadati</taxon>
        <taxon>Pseudomonadota</taxon>
        <taxon>Gammaproteobacteria</taxon>
        <taxon>Enterobacterales</taxon>
        <taxon>Enterobacteriaceae</taxon>
        <taxon>Salmonella</taxon>
    </lineage>
</organism>
<sequence>MAIKLIVGLANPGAEYAATRHNAGAWYVDLLAERLRAPLREEPKFFGYTSRITLEGEDVRLLVPTTFMNLSGKAVGAMASFYRIQPDEILVAHDELDLPPGVAKFKLGGGHGGHNGLKDIISKLGNNPNFHRLRVGIGHPGDKNKVVGFVLGKPPVSEQKLIDEAIDEAARCTELWFKEGLAKATSRLHTFKAQ</sequence>
<name>PTH_SALTY</name>
<keyword id="KW-0002">3D-structure</keyword>
<keyword id="KW-0963">Cytoplasm</keyword>
<keyword id="KW-0378">Hydrolase</keyword>
<keyword id="KW-1185">Reference proteome</keyword>
<keyword id="KW-0694">RNA-binding</keyword>
<keyword id="KW-0820">tRNA-binding</keyword>